<dbReference type="EMBL" id="AY958086">
    <property type="protein sequence ID" value="AAX45826.1"/>
    <property type="molecule type" value="Genomic_DNA"/>
</dbReference>
<dbReference type="RefSeq" id="YP_636563.1">
    <property type="nucleotide sequence ID" value="NC_008117.1"/>
</dbReference>
<dbReference type="SMR" id="Q32RG3"/>
<dbReference type="GeneID" id="4108146"/>
<dbReference type="GO" id="GO:0009535">
    <property type="term" value="C:chloroplast thylakoid membrane"/>
    <property type="evidence" value="ECO:0007669"/>
    <property type="project" value="UniProtKB-SubCell"/>
</dbReference>
<dbReference type="GO" id="GO:0005739">
    <property type="term" value="C:mitochondrion"/>
    <property type="evidence" value="ECO:0007669"/>
    <property type="project" value="GOC"/>
</dbReference>
<dbReference type="GO" id="GO:0045158">
    <property type="term" value="F:electron transporter, transferring electrons within cytochrome b6/f complex of photosystem II activity"/>
    <property type="evidence" value="ECO:0007669"/>
    <property type="project" value="UniProtKB-UniRule"/>
</dbReference>
<dbReference type="GO" id="GO:0045156">
    <property type="term" value="F:electron transporter, transferring electrons within the cyclic electron transport pathway of photosynthesis activity"/>
    <property type="evidence" value="ECO:0007669"/>
    <property type="project" value="InterPro"/>
</dbReference>
<dbReference type="GO" id="GO:0008121">
    <property type="term" value="F:ubiquinol-cytochrome-c reductase activity"/>
    <property type="evidence" value="ECO:0007669"/>
    <property type="project" value="TreeGrafter"/>
</dbReference>
<dbReference type="GO" id="GO:0006122">
    <property type="term" value="P:mitochondrial electron transport, ubiquinol to cytochrome c"/>
    <property type="evidence" value="ECO:0007669"/>
    <property type="project" value="TreeGrafter"/>
</dbReference>
<dbReference type="GO" id="GO:0009767">
    <property type="term" value="P:photosynthetic electron transport chain"/>
    <property type="evidence" value="ECO:0007669"/>
    <property type="project" value="InterPro"/>
</dbReference>
<dbReference type="CDD" id="cd00290">
    <property type="entry name" value="cytochrome_b_C"/>
    <property type="match status" value="1"/>
</dbReference>
<dbReference type="FunFam" id="1.10.287.980:FF:000001">
    <property type="entry name" value="Cytochrome b6-f complex subunit 4"/>
    <property type="match status" value="1"/>
</dbReference>
<dbReference type="FunFam" id="1.20.5.510:FF:000002">
    <property type="entry name" value="Cytochrome b6-f complex subunit 4"/>
    <property type="match status" value="1"/>
</dbReference>
<dbReference type="Gene3D" id="1.10.287.980">
    <property type="entry name" value="plastocyanin oxidoreductase"/>
    <property type="match status" value="1"/>
</dbReference>
<dbReference type="Gene3D" id="1.20.5.510">
    <property type="entry name" value="Single helix bin"/>
    <property type="match status" value="1"/>
</dbReference>
<dbReference type="HAMAP" id="MF_01344">
    <property type="entry name" value="Cytb6_f_subIV"/>
    <property type="match status" value="1"/>
</dbReference>
<dbReference type="InterPro" id="IPR005798">
    <property type="entry name" value="Cyt_b/b6_C"/>
</dbReference>
<dbReference type="InterPro" id="IPR036150">
    <property type="entry name" value="Cyt_b/b6_C_sf"/>
</dbReference>
<dbReference type="InterPro" id="IPR005870">
    <property type="entry name" value="Cyt_b6/f_cplx_suIV"/>
</dbReference>
<dbReference type="InterPro" id="IPR048260">
    <property type="entry name" value="Cytochrome_b_C_euk/bac"/>
</dbReference>
<dbReference type="NCBIfam" id="TIGR01156">
    <property type="entry name" value="cytb6_f_IV"/>
    <property type="match status" value="1"/>
</dbReference>
<dbReference type="PANTHER" id="PTHR19271">
    <property type="entry name" value="CYTOCHROME B"/>
    <property type="match status" value="1"/>
</dbReference>
<dbReference type="PANTHER" id="PTHR19271:SF41">
    <property type="entry name" value="CYTOCHROME B_B6 C-TERMINAL REGION PROFILE DOMAIN-CONTAINING PROTEIN"/>
    <property type="match status" value="1"/>
</dbReference>
<dbReference type="Pfam" id="PF00032">
    <property type="entry name" value="Cytochrom_B_C"/>
    <property type="match status" value="1"/>
</dbReference>
<dbReference type="PIRSF" id="PIRSF000033">
    <property type="entry name" value="B6f_17K"/>
    <property type="match status" value="1"/>
</dbReference>
<dbReference type="SUPFAM" id="SSF81648">
    <property type="entry name" value="a domain/subunit of cytochrome bc1 complex (Ubiquinol-cytochrome c reductase)"/>
    <property type="match status" value="1"/>
</dbReference>
<dbReference type="PROSITE" id="PS51003">
    <property type="entry name" value="CYTB_CTER"/>
    <property type="match status" value="1"/>
</dbReference>
<proteinExistence type="inferred from homology"/>
<comment type="function">
    <text evidence="2">Component of the cytochrome b6-f complex, which mediates electron transfer between photosystem II (PSII) and photosystem I (PSI), cyclic electron flow around PSI, and state transitions.</text>
</comment>
<comment type="subunit">
    <text evidence="1">The 4 large subunits of the cytochrome b6-f complex are cytochrome b6, subunit IV (17 kDa polypeptide, petD), cytochrome f and the Rieske protein, while the 4 small subunits are petG, petL, petM and petN. The complex functions as a dimer (By similarity).</text>
</comment>
<comment type="subcellular location">
    <subcellularLocation>
        <location evidence="2">Plastid</location>
        <location evidence="2">Chloroplast thylakoid membrane</location>
        <topology evidence="2">Multi-pass membrane protein</topology>
    </subcellularLocation>
</comment>
<comment type="similarity">
    <text evidence="2">Belongs to the cytochrome b family. PetD subfamily.</text>
</comment>
<organism>
    <name type="scientific">Zygnema circumcarinatum</name>
    <name type="common">Green alga</name>
    <dbReference type="NCBI Taxonomy" id="35869"/>
    <lineage>
        <taxon>Eukaryota</taxon>
        <taxon>Viridiplantae</taxon>
        <taxon>Streptophyta</taxon>
        <taxon>Zygnematophyceae</taxon>
        <taxon>Zygnematophycidae</taxon>
        <taxon>Zygnematales</taxon>
        <taxon>Zygnemataceae</taxon>
        <taxon>Zygnema</taxon>
    </lineage>
</organism>
<accession>Q32RG3</accession>
<protein>
    <recommendedName>
        <fullName evidence="2">Cytochrome b6-f complex subunit 4</fullName>
    </recommendedName>
    <alternativeName>
        <fullName evidence="2">17 kDa polypeptide</fullName>
    </alternativeName>
</protein>
<gene>
    <name evidence="2" type="primary">petD</name>
</gene>
<feature type="chain" id="PRO_0000061897" description="Cytochrome b6-f complex subunit 4">
    <location>
        <begin position="1"/>
        <end position="160"/>
    </location>
</feature>
<feature type="transmembrane region" description="Helical" evidence="2">
    <location>
        <begin position="36"/>
        <end position="56"/>
    </location>
</feature>
<feature type="transmembrane region" description="Helical" evidence="2">
    <location>
        <begin position="95"/>
        <end position="115"/>
    </location>
</feature>
<feature type="transmembrane region" description="Helical" evidence="2">
    <location>
        <begin position="131"/>
        <end position="151"/>
    </location>
</feature>
<name>PETD_ZYGCR</name>
<reference key="1">
    <citation type="journal article" date="2005" name="BMC Biol.">
        <title>The complete chloroplast DNA sequences of the charophycean green algae Staurastrum and Zygnema reveal that the chloroplast genome underwent extensive changes during the evolution of the Zygnematales.</title>
        <authorList>
            <person name="Turmel M."/>
            <person name="Otis C."/>
            <person name="Lemieux C."/>
        </authorList>
    </citation>
    <scope>NUCLEOTIDE SEQUENCE [LARGE SCALE GENOMIC DNA]</scope>
</reference>
<evidence type="ECO:0000250" key="1"/>
<evidence type="ECO:0000255" key="2">
    <source>
        <dbReference type="HAMAP-Rule" id="MF_01344"/>
    </source>
</evidence>
<geneLocation type="chloroplast"/>
<sequence>MGVTKKPDLTDPVLRAKLAKGMGHNYYGEPAWPNDLLYIFPVVIFGTIACNVGLAVMEPSMIGEPANPFATPLEILPEWYFFPVFQILRTVPNKLLGVLLMAAVPAGLLTVPFLENVNKFQNPFRRPVATTVFLIGTVVSIWLGIGAAMPIDQSLTLGLF</sequence>
<keyword id="KW-0150">Chloroplast</keyword>
<keyword id="KW-0249">Electron transport</keyword>
<keyword id="KW-0472">Membrane</keyword>
<keyword id="KW-0602">Photosynthesis</keyword>
<keyword id="KW-0934">Plastid</keyword>
<keyword id="KW-0793">Thylakoid</keyword>
<keyword id="KW-0812">Transmembrane</keyword>
<keyword id="KW-1133">Transmembrane helix</keyword>
<keyword id="KW-0813">Transport</keyword>